<keyword id="KW-0002">3D-structure</keyword>
<keyword id="KW-0134">Cell wall</keyword>
<keyword id="KW-0903">Direct protein sequencing</keyword>
<keyword id="KW-0390">IgG-binding protein</keyword>
<keyword id="KW-0572">Peptidoglycan-anchor</keyword>
<keyword id="KW-1185">Reference proteome</keyword>
<keyword id="KW-0677">Repeat</keyword>
<keyword id="KW-0964">Secreted</keyword>
<keyword id="KW-0732">Signal</keyword>
<keyword id="KW-0843">Virulence</keyword>
<accession>P02976</accession>
<accession>Q2G1N8</accession>
<comment type="function">
    <text evidence="1 6 12 14">Plays a role in the inhibition of the host innate and adaptive immune responses. Possesses five immunoglobulin-binding domains that capture both the fragment crystallizable region (Fc region) and the Fab region (part of Ig that identifies antigen) of immunoglobulins (PubMed:10805799, PubMed:2938951, PubMed:4163007). In turn, Staphylococcus aureus is protected from phagocytic killing via inhibition of Ig Fc region. In addition, the host elicited B-cell response is prevented due to a decrease of antibody-secreting cell proliferation that enter the bone marrow, thereby decreasing long-term antibody production. Inhibits osteogenesis by preventing osteoblast proliferation and expression of alkaline phosphatase, type I collagen, osteopontin and osteocalcin. Acts directly as a pro-inflammatory factor in the lung through its ability to bind and activate tumor necrosis factor alpha receptor 1/TNFRSF1A (By similarity).</text>
</comment>
<comment type="subunit">
    <text evidence="1">Interacts with host TNFRSF1A; this interaction leads to the stimulation of both surface expression and shedding of TNFRSF1A.</text>
</comment>
<comment type="subcellular location">
    <subcellularLocation>
        <location evidence="5 7 8 9 13 14 15 19 21 22">Secreted</location>
        <location evidence="5 7 8 9 13 14 15 19 21 22">Cell wall</location>
        <topology evidence="5 7 9 15 18 19 21">Peptidoglycan-anchor</topology>
        <orientation evidence="8 21">Extracellular side</orientation>
    </subcellularLocation>
    <subcellularLocation>
        <location evidence="12 13">Secreted</location>
    </subcellularLocation>
    <text evidence="5 8 9 20">Cell wall anchoring is conferred by the LPXTG motif and following sequences (PubMed:1638631). Anchored by sortase A (PubMed:10427003). SpA from strains A676 and V-I is secreted whereas SpA from Cowan 1 and 8325-4 is mostly attached to the cell wall (Probable). Newly synthesized protein is deposited at 2-4 foci/cell and eventually is distributed in a ring around the cell (PubMed:17416657).</text>
</comment>
<comment type="induction">
    <text evidence="10">More protein is secreted in a secG or double secG/secY2 mutant (at protein level).</text>
</comment>
<comment type="domain">
    <text evidence="8 12 17">Each of the immunoglobulin-binding region repeats can bind the Fc region of an immunoglobulin (PubMed:2938951). Cell wall anchoring is conferred by the LPXTG motif and following sequences (residues 482-516) which are necessary and sufficient to target other proteins to the cell wall (PubMed:1638631). The YSIRK-G/S motif in the signal sequence plays a role in the secretion efficiency for SpA, it may have a specialized recognition mode (Probable).</text>
</comment>
<comment type="disruption phenotype">
    <text evidence="7 11 13">Decreased virulence in mice (PubMed:3679545). Bacteria do not bind IgG (PubMed:12700270). No visible phenotype during growth in liquid culture (PubMed:22447609).</text>
</comment>
<comment type="biotechnology">
    <text evidence="16">Important immunodiagnostic reagent because of its ability to bind the Fab and Fc fragments of a wide range of mammalian immunoglobulins.</text>
</comment>
<comment type="similarity">
    <text evidence="16">Belongs to the immunoglobulin-binding protein SpA family.</text>
</comment>
<sequence length="516" mass="56437">MKKKNIYSIRKLGVGIASVTLGTLLISGGVTPAANAAQHDEAQQNAFYQVLNMPNLNADQRNGFIQSLKDDPSQSANVLGEAQKLNDSQAPKADAQQNNFNKDQQSAFYEILNMPNLNEAQRNGFIQSLKDDPSQSTNVLGEAKKLNESQAPKADNNFNKEQQNAFYEILNMPNLNEEQRNGFIQSLKDDPSQSANLLSEAKKLNESQAPKADNKFNKEQQNAFYEILHLPNLNEEQRNGFIQSLKDDPSQSANLLAEAKKLNDAQAPKADNKFNKEQQNAFYEILHLPNLTEEQRNGFIQSLKDDPSVSKEILAEAKKLNDAQAPKEEDNNKPGKEDNNKPGKEDNNKPGKEDNNKPGKEDNNKPGKEDGNKPGKEDNKKPGKEDGNKPGKEDNKKPGKEDGNKPGKEDGNKPGKEDGNGVHVVKPGDTVNDIAKANGTTADKIAADNKLADKNMIKPGQELVVDKKQPANHADANKAQALPETGEENPFIGTTVFGGLSLALGAALLAGRRREL</sequence>
<gene>
    <name type="primary">spa</name>
    <name type="ordered locus">SAOUHSC_00069</name>
</gene>
<protein>
    <recommendedName>
        <fullName>Immunoglobulin G-binding protein A</fullName>
        <shortName>IgG-binding protein A</shortName>
    </recommendedName>
    <alternativeName>
        <fullName>Staphylococcal protein A</fullName>
        <shortName>SpA</shortName>
    </alternativeName>
</protein>
<dbReference type="EMBL" id="J01786">
    <property type="protein sequence ID" value="AAA26676.1"/>
    <property type="molecule type" value="Genomic_DNA"/>
</dbReference>
<dbReference type="EMBL" id="CP000253">
    <property type="protein sequence ID" value="ABD29253.1"/>
    <property type="molecule type" value="Genomic_DNA"/>
</dbReference>
<dbReference type="EMBL" id="V01287">
    <property type="protein sequence ID" value="CAA24596.1"/>
    <property type="molecule type" value="Genomic_DNA"/>
</dbReference>
<dbReference type="PIR" id="A58531">
    <property type="entry name" value="QVSAA"/>
</dbReference>
<dbReference type="RefSeq" id="WP_000728764.1">
    <property type="nucleotide sequence ID" value="NC_007795.1"/>
</dbReference>
<dbReference type="RefSeq" id="YP_498670.1">
    <property type="nucleotide sequence ID" value="NC_007795.1"/>
</dbReference>
<dbReference type="PDB" id="1DEE">
    <property type="method" value="X-ray"/>
    <property type="resolution" value="2.70 A"/>
    <property type="chains" value="G/H=100-153"/>
</dbReference>
<dbReference type="PDB" id="4Y4Y">
    <property type="method" value="X-ray"/>
    <property type="resolution" value="3.00 A"/>
    <property type="chains" value="A/B/C/D/E/F/G/H/I/J/K/L/M/N/O/P/Q/R/S/T/U/V/W/X/Y/Z/a/b/c/d=158-211, A/B/C/D/E/F/G/H/I/J/K/L/M/N/O/P/Q/R/S/T/U/V/W/X/Y/Z/a/b/c/d=219-354, A/B/C/D/E/F/G/H/I/J/K/L/M/N/O/P/Q/R/S/T/U/V/W/X/Y/Z/a/b/c/d=236-459"/>
</dbReference>
<dbReference type="PDB" id="4Y5Z">
    <property type="method" value="X-ray"/>
    <property type="resolution" value="2.95 A"/>
    <property type="chains" value="0/1/2/3/4/5/6/7/A/B/C/D/E/F/G/H/I/J/K/L/M/N/O/P/Q/R/S/T/U/V=158-211"/>
</dbReference>
<dbReference type="PDB" id="5U3D">
    <property type="method" value="X-ray"/>
    <property type="resolution" value="1.77 A"/>
    <property type="chains" value="C=101-151"/>
</dbReference>
<dbReference type="PDB" id="5U4Y">
    <property type="method" value="X-ray"/>
    <property type="resolution" value="2.50 A"/>
    <property type="chains" value="C/D=215-268"/>
</dbReference>
<dbReference type="PDB" id="5U5F">
    <property type="method" value="X-ray"/>
    <property type="resolution" value="1.81 A"/>
    <property type="chains" value="C=101-151"/>
</dbReference>
<dbReference type="PDB" id="5U5M">
    <property type="method" value="X-ray"/>
    <property type="resolution" value="1.88 A"/>
    <property type="chains" value="C=101-151"/>
</dbReference>
<dbReference type="PDB" id="5U6A">
    <property type="method" value="X-ray"/>
    <property type="resolution" value="1.74 A"/>
    <property type="chains" value="C=101-151"/>
</dbReference>
<dbReference type="PDB" id="6B9Y">
    <property type="method" value="X-ray"/>
    <property type="resolution" value="2.14 A"/>
    <property type="chains" value="C=101-151"/>
</dbReference>
<dbReference type="PDB" id="6B9Z">
    <property type="method" value="X-ray"/>
    <property type="resolution" value="1.82 A"/>
    <property type="chains" value="C=101-151"/>
</dbReference>
<dbReference type="PDB" id="6BAE">
    <property type="method" value="X-ray"/>
    <property type="resolution" value="2.14 A"/>
    <property type="chains" value="C=101-151"/>
</dbReference>
<dbReference type="PDB" id="6BAH">
    <property type="method" value="X-ray"/>
    <property type="resolution" value="1.90 A"/>
    <property type="chains" value="C=101-151"/>
</dbReference>
<dbReference type="PDB" id="6K3M">
    <property type="method" value="X-ray"/>
    <property type="resolution" value="1.80 A"/>
    <property type="chains" value="H=100-150"/>
</dbReference>
<dbReference type="PDB" id="6K64">
    <property type="method" value="X-ray"/>
    <property type="resolution" value="1.93 A"/>
    <property type="chains" value="C/H=100-151"/>
</dbReference>
<dbReference type="PDB" id="6K65">
    <property type="method" value="X-ray"/>
    <property type="resolution" value="1.65 A"/>
    <property type="chains" value="A=218-266"/>
</dbReference>
<dbReference type="PDB" id="6K68">
    <property type="method" value="X-ray"/>
    <property type="resolution" value="3.20 A"/>
    <property type="chains" value="E/H/I/L=100-145"/>
</dbReference>
<dbReference type="PDB" id="6K6A">
    <property type="method" value="X-ray"/>
    <property type="resolution" value="1.94 A"/>
    <property type="chains" value="C/D=100-151"/>
</dbReference>
<dbReference type="PDB" id="6K6B">
    <property type="method" value="X-ray"/>
    <property type="resolution" value="2.06 A"/>
    <property type="chains" value="B=90-152"/>
</dbReference>
<dbReference type="PDB" id="6SOW">
    <property type="method" value="NMR"/>
    <property type="chains" value="A=271-327"/>
</dbReference>
<dbReference type="PDB" id="8DA3">
    <property type="method" value="X-ray"/>
    <property type="resolution" value="1.06 A"/>
    <property type="chains" value="A=213-269"/>
</dbReference>
<dbReference type="PDB" id="8DA4">
    <property type="method" value="X-ray"/>
    <property type="resolution" value="1.92 A"/>
    <property type="chains" value="A/C/E=213-269"/>
</dbReference>
<dbReference type="PDB" id="8DA5">
    <property type="method" value="X-ray"/>
    <property type="resolution" value="1.00 A"/>
    <property type="chains" value="A/C=212-269"/>
</dbReference>
<dbReference type="PDB" id="8DA6">
    <property type="method" value="X-ray"/>
    <property type="resolution" value="1.50 A"/>
    <property type="chains" value="A/C=213-269"/>
</dbReference>
<dbReference type="PDB" id="8DA7">
    <property type="method" value="X-ray"/>
    <property type="resolution" value="1.02 A"/>
    <property type="chains" value="A=213-269"/>
</dbReference>
<dbReference type="PDB" id="8DA8">
    <property type="method" value="X-ray"/>
    <property type="resolution" value="1.29 A"/>
    <property type="chains" value="A=213-269"/>
</dbReference>
<dbReference type="PDB" id="8DA9">
    <property type="method" value="X-ray"/>
    <property type="resolution" value="1.35 A"/>
    <property type="chains" value="A/C=213-269"/>
</dbReference>
<dbReference type="PDB" id="8DAA">
    <property type="method" value="X-ray"/>
    <property type="resolution" value="1.75 A"/>
    <property type="chains" value="A/C=213-269"/>
</dbReference>
<dbReference type="PDB" id="8DAB">
    <property type="method" value="X-ray"/>
    <property type="resolution" value="1.13 A"/>
    <property type="chains" value="A=213-269"/>
</dbReference>
<dbReference type="PDB" id="8DAC">
    <property type="method" value="X-ray"/>
    <property type="resolution" value="1.19 A"/>
    <property type="chains" value="A=213-269"/>
</dbReference>
<dbReference type="PDB" id="8R2P">
    <property type="method" value="X-ray"/>
    <property type="resolution" value="2.22 A"/>
    <property type="chains" value="A/B/C/D=218-269"/>
</dbReference>
<dbReference type="PDB" id="9FZM">
    <property type="method" value="NMR"/>
    <property type="chains" value="A=192-289"/>
</dbReference>
<dbReference type="PDBsum" id="1DEE"/>
<dbReference type="PDBsum" id="4Y4Y"/>
<dbReference type="PDBsum" id="4Y5Z"/>
<dbReference type="PDBsum" id="5U3D"/>
<dbReference type="PDBsum" id="5U4Y"/>
<dbReference type="PDBsum" id="5U5F"/>
<dbReference type="PDBsum" id="5U5M"/>
<dbReference type="PDBsum" id="5U6A"/>
<dbReference type="PDBsum" id="6B9Y"/>
<dbReference type="PDBsum" id="6B9Z"/>
<dbReference type="PDBsum" id="6BAE"/>
<dbReference type="PDBsum" id="6BAH"/>
<dbReference type="PDBsum" id="6K3M"/>
<dbReference type="PDBsum" id="6K64"/>
<dbReference type="PDBsum" id="6K65"/>
<dbReference type="PDBsum" id="6K68"/>
<dbReference type="PDBsum" id="6K6A"/>
<dbReference type="PDBsum" id="6K6B"/>
<dbReference type="PDBsum" id="6SOW"/>
<dbReference type="PDBsum" id="8DA3"/>
<dbReference type="PDBsum" id="8DA4"/>
<dbReference type="PDBsum" id="8DA5"/>
<dbReference type="PDBsum" id="8DA6"/>
<dbReference type="PDBsum" id="8DA7"/>
<dbReference type="PDBsum" id="8DA8"/>
<dbReference type="PDBsum" id="8DA9"/>
<dbReference type="PDBsum" id="8DAA"/>
<dbReference type="PDBsum" id="8DAB"/>
<dbReference type="PDBsum" id="8DAC"/>
<dbReference type="PDBsum" id="8R2P"/>
<dbReference type="PDBsum" id="9FZM"/>
<dbReference type="SMR" id="P02976"/>
<dbReference type="MINT" id="P02976"/>
<dbReference type="STRING" id="93061.SAOUHSC_00069"/>
<dbReference type="ABCD" id="P02976">
    <property type="antibodies" value="3 sequenced antibodies"/>
</dbReference>
<dbReference type="GeneID" id="3919448"/>
<dbReference type="KEGG" id="sao:SAOUHSC_00069"/>
<dbReference type="PATRIC" id="fig|93061.5.peg.59"/>
<dbReference type="eggNOG" id="COG1388">
    <property type="taxonomic scope" value="Bacteria"/>
</dbReference>
<dbReference type="HOGENOM" id="CLU_024983_0_0_9"/>
<dbReference type="OrthoDB" id="2408875at2"/>
<dbReference type="EvolutionaryTrace" id="P02976"/>
<dbReference type="PHI-base" id="PHI:4570"/>
<dbReference type="PRO" id="PR:P02976"/>
<dbReference type="Proteomes" id="UP000008816">
    <property type="component" value="Chromosome"/>
</dbReference>
<dbReference type="GO" id="GO:0005576">
    <property type="term" value="C:extracellular region"/>
    <property type="evidence" value="ECO:0007669"/>
    <property type="project" value="UniProtKB-SubCell"/>
</dbReference>
<dbReference type="GO" id="GO:0019864">
    <property type="term" value="F:IgG binding"/>
    <property type="evidence" value="ECO:0007669"/>
    <property type="project" value="UniProtKB-KW"/>
</dbReference>
<dbReference type="GO" id="GO:0141129">
    <property type="term" value="P:symbiont-mediated suppression of host signal transduction pathway via antagonism of host cell surface receptor"/>
    <property type="evidence" value="ECO:0000269"/>
    <property type="project" value="SigSci"/>
</dbReference>
<dbReference type="CDD" id="cd00118">
    <property type="entry name" value="LysM"/>
    <property type="match status" value="1"/>
</dbReference>
<dbReference type="FunFam" id="1.20.5.420:FF:000003">
    <property type="entry name" value="Immunoglobulin G-binding protein A"/>
    <property type="match status" value="3"/>
</dbReference>
<dbReference type="Gene3D" id="1.20.5.420">
    <property type="entry name" value="Immunoglobulin FC, subunit C"/>
    <property type="match status" value="5"/>
</dbReference>
<dbReference type="Gene3D" id="3.10.350.10">
    <property type="entry name" value="LysM domain"/>
    <property type="match status" value="1"/>
</dbReference>
<dbReference type="InterPro" id="IPR009063">
    <property type="entry name" value="Ig/albumin-bd_sf"/>
</dbReference>
<dbReference type="InterPro" id="IPR019931">
    <property type="entry name" value="LPXTG_anchor"/>
</dbReference>
<dbReference type="InterPro" id="IPR018392">
    <property type="entry name" value="LysM_dom"/>
</dbReference>
<dbReference type="InterPro" id="IPR036779">
    <property type="entry name" value="LysM_dom_sf"/>
</dbReference>
<dbReference type="InterPro" id="IPR005038">
    <property type="entry name" value="Octapeptide"/>
</dbReference>
<dbReference type="InterPro" id="IPR003132">
    <property type="entry name" value="Protein_A_Ig-bd"/>
</dbReference>
<dbReference type="InterPro" id="IPR005877">
    <property type="entry name" value="YSIRK_signal_dom"/>
</dbReference>
<dbReference type="NCBIfam" id="TIGR01167">
    <property type="entry name" value="LPXTG_anchor"/>
    <property type="match status" value="1"/>
</dbReference>
<dbReference type="NCBIfam" id="TIGR01168">
    <property type="entry name" value="YSIRK_signal"/>
    <property type="match status" value="1"/>
</dbReference>
<dbReference type="Pfam" id="PF02216">
    <property type="entry name" value="B"/>
    <property type="match status" value="5"/>
</dbReference>
<dbReference type="Pfam" id="PF00746">
    <property type="entry name" value="Gram_pos_anchor"/>
    <property type="match status" value="1"/>
</dbReference>
<dbReference type="Pfam" id="PF01476">
    <property type="entry name" value="LysM"/>
    <property type="match status" value="1"/>
</dbReference>
<dbReference type="Pfam" id="PF03373">
    <property type="entry name" value="Octapeptide"/>
    <property type="match status" value="12"/>
</dbReference>
<dbReference type="Pfam" id="PF04650">
    <property type="entry name" value="YSIRK_signal"/>
    <property type="match status" value="1"/>
</dbReference>
<dbReference type="SMART" id="SM00257">
    <property type="entry name" value="LysM"/>
    <property type="match status" value="1"/>
</dbReference>
<dbReference type="SUPFAM" id="SSF46997">
    <property type="entry name" value="Bacterial immunoglobulin/albumin-binding domains"/>
    <property type="match status" value="5"/>
</dbReference>
<dbReference type="SUPFAM" id="SSF54106">
    <property type="entry name" value="LysM domain"/>
    <property type="match status" value="1"/>
</dbReference>
<dbReference type="PROSITE" id="PS50847">
    <property type="entry name" value="GRAM_POS_ANCHORING"/>
    <property type="match status" value="1"/>
</dbReference>
<dbReference type="PROSITE" id="PS51782">
    <property type="entry name" value="LYSM"/>
    <property type="match status" value="1"/>
</dbReference>
<organism>
    <name type="scientific">Staphylococcus aureus (strain NCTC 8325 / PS 47)</name>
    <dbReference type="NCBI Taxonomy" id="93061"/>
    <lineage>
        <taxon>Bacteria</taxon>
        <taxon>Bacillati</taxon>
        <taxon>Bacillota</taxon>
        <taxon>Bacilli</taxon>
        <taxon>Bacillales</taxon>
        <taxon>Staphylococcaceae</taxon>
        <taxon>Staphylococcus</taxon>
    </lineage>
</organism>
<feature type="signal peptide" evidence="8 12">
    <location>
        <begin position="1"/>
        <end position="36"/>
    </location>
</feature>
<feature type="chain" id="PRO_0000005653" description="Immunoglobulin G-binding protein A">
    <location>
        <begin position="37"/>
        <end position="485"/>
    </location>
</feature>
<feature type="propeptide" id="PRO_0000005654" description="Removed by sortase A" evidence="2 5 22">
    <location>
        <begin position="486"/>
        <end position="516"/>
    </location>
</feature>
<feature type="repeat" description="Immunoglobulin-binding region E" evidence="20">
    <location>
        <begin position="37"/>
        <end position="92"/>
    </location>
</feature>
<feature type="repeat" description="Immunoglobulin-binding region D" evidence="20">
    <location>
        <begin position="93"/>
        <end position="153"/>
    </location>
</feature>
<feature type="repeat" description="Immunoglobulin-binding region A" evidence="20">
    <location>
        <begin position="154"/>
        <end position="211"/>
    </location>
</feature>
<feature type="repeat" description="Immunoglobulin-binding region B" evidence="20">
    <location>
        <begin position="212"/>
        <end position="269"/>
    </location>
</feature>
<feature type="repeat" description="Immunoglobulin-binding region C" evidence="20">
    <location>
        <begin position="270"/>
        <end position="327"/>
    </location>
</feature>
<feature type="repeat" description="2-1">
    <location>
        <begin position="333"/>
        <end position="340"/>
    </location>
</feature>
<feature type="repeat" description="2-2">
    <location>
        <begin position="341"/>
        <end position="348"/>
    </location>
</feature>
<feature type="repeat" description="2-3">
    <location>
        <begin position="349"/>
        <end position="356"/>
    </location>
</feature>
<feature type="repeat" description="2-4">
    <location>
        <begin position="357"/>
        <end position="364"/>
    </location>
</feature>
<feature type="repeat" description="2-5">
    <location>
        <begin position="365"/>
        <end position="372"/>
    </location>
</feature>
<feature type="repeat" description="2-6">
    <location>
        <begin position="373"/>
        <end position="380"/>
    </location>
</feature>
<feature type="repeat" description="2-7">
    <location>
        <begin position="381"/>
        <end position="388"/>
    </location>
</feature>
<feature type="repeat" description="2-8">
    <location>
        <begin position="389"/>
        <end position="396"/>
    </location>
</feature>
<feature type="repeat" description="2-9">
    <location>
        <begin position="397"/>
        <end position="404"/>
    </location>
</feature>
<feature type="repeat" description="2-10">
    <location>
        <begin position="405"/>
        <end position="412"/>
    </location>
</feature>
<feature type="repeat" description="2-11">
    <location>
        <begin position="413"/>
        <end position="420"/>
    </location>
</feature>
<feature type="domain" description="LysM" evidence="3">
    <location>
        <begin position="421"/>
        <end position="465"/>
    </location>
</feature>
<feature type="region of interest" description="Disordered" evidence="4">
    <location>
        <begin position="318"/>
        <end position="440"/>
    </location>
</feature>
<feature type="region of interest" description="11 X 8 AA approximate tandem repeats">
    <location>
        <begin position="333"/>
        <end position="420"/>
    </location>
</feature>
<feature type="region of interest" description="Disordered" evidence="4">
    <location>
        <begin position="467"/>
        <end position="487"/>
    </location>
</feature>
<feature type="short sequence motif" description="YSIRK-G/S signaling motif" evidence="17">
    <location>
        <begin position="7"/>
        <end position="18"/>
    </location>
</feature>
<feature type="short sequence motif" description="LPXTG sorting signal" evidence="2 8">
    <location>
        <begin position="482"/>
        <end position="486"/>
    </location>
</feature>
<feature type="compositionally biased region" description="Basic and acidic residues" evidence="4">
    <location>
        <begin position="318"/>
        <end position="420"/>
    </location>
</feature>
<feature type="modified residue" description="Pentaglycyl murein peptidoglycan amidated threonine" evidence="2 21 23">
    <location>
        <position position="485"/>
    </location>
</feature>
<feature type="mutagenesis site" description="Wild-type anchoring to cell wall, decreased signal peptide processing rate, decreased amount of protein on cell surface, overall IgG-binding capacity is slightly decreased." evidence="7">
    <location>
        <begin position="7"/>
        <end position="10"/>
    </location>
</feature>
<feature type="mutagenesis site" description="Altered processing of signal peptide, precursor accumulates in membrane. More aberrant processing; when associated with 18-A or deletion of 7-10." evidence="7">
    <original>G</original>
    <variation>A</variation>
    <location>
        <position position="15"/>
    </location>
</feature>
<feature type="mutagenesis site" description="Altered processing of signal peptide, precursor accumulates in membrane and cytoplasm. More aberrant processing; when associated with 15-A or deletion of 7-10." evidence="7">
    <original>S</original>
    <variation>A</variation>
    <location>
        <position position="18"/>
    </location>
</feature>
<feature type="mutagenesis site" description="Wild-type anchoring to cell wall." evidence="8">
    <original>K</original>
    <variation>E</variation>
    <location>
        <position position="478"/>
    </location>
</feature>
<feature type="mutagenesis site" description="Protein secreted, no longer anchored to cell wall." evidence="8">
    <location>
        <begin position="482"/>
        <end position="516"/>
    </location>
</feature>
<feature type="mutagenesis site" description="Protein mis-sorted, found in cytoplasm, membrane and cell wall, cells bind Ig poorly." evidence="8">
    <location>
        <begin position="482"/>
        <end position="487"/>
    </location>
</feature>
<feature type="mutagenesis site" description="Protein mis-sorted, found in cytoplasm, membrane and cell wall, cells bind Ig poorly." evidence="8">
    <original>P</original>
    <variation>N</variation>
    <location>
        <position position="483"/>
    </location>
</feature>
<feature type="mutagenesis site" description="Wild-type anchoring to cell wall." evidence="8">
    <original>T</original>
    <variation>A</variation>
    <location>
        <position position="485"/>
    </location>
</feature>
<feature type="mutagenesis site" description="Protein secreted, no longer anchored to cell wall." evidence="8">
    <location>
        <begin position="488"/>
        <end position="516"/>
    </location>
</feature>
<feature type="mutagenesis site" description="Protein secreted, no longer anchored to cell wall." evidence="8">
    <location>
        <begin position="512"/>
        <end position="516"/>
    </location>
</feature>
<feature type="mutagenesis site" description="Protein secreted, no longer anchored to cell wall." evidence="8">
    <location>
        <begin position="514"/>
        <end position="516"/>
    </location>
</feature>
<feature type="mutagenesis site" description="Protein mis-sorted, found in cytoplasm, membrane and cell wall, cells bind Ig poorly." evidence="8">
    <location>
        <begin position="515"/>
        <end position="516"/>
    </location>
</feature>
<feature type="mutagenesis site" description="Protein secreted, no longer anchored to cell wall." evidence="8">
    <original>L</original>
    <variation>C</variation>
    <location>
        <position position="516"/>
    </location>
</feature>
<feature type="mutagenesis site" description="Wild-type anchoring to cell wall." evidence="8">
    <location>
        <position position="516"/>
    </location>
</feature>
<feature type="sequence conflict" description="In Ref. 4; CAA24596." evidence="16" ref="4">
    <original>N</original>
    <variation>D</variation>
    <location>
        <position position="101"/>
    </location>
</feature>
<feature type="sequence conflict" description="In Ref. 1; AAA26676." evidence="16" ref="1">
    <original>D</original>
    <variation>DNNKPGKED</variation>
    <location>
        <position position="370"/>
    </location>
</feature>
<feature type="helix" evidence="26">
    <location>
        <begin position="102"/>
        <end position="113"/>
    </location>
</feature>
<feature type="strand" evidence="25">
    <location>
        <begin position="115"/>
        <end position="117"/>
    </location>
</feature>
<feature type="helix" evidence="26">
    <location>
        <begin position="119"/>
        <end position="131"/>
    </location>
</feature>
<feature type="helix" evidence="26">
    <location>
        <begin position="133"/>
        <end position="135"/>
    </location>
</feature>
<feature type="helix" evidence="26">
    <location>
        <begin position="136"/>
        <end position="149"/>
    </location>
</feature>
<feature type="helix" evidence="28">
    <location>
        <begin position="215"/>
        <end position="229"/>
    </location>
</feature>
<feature type="helix" evidence="28">
    <location>
        <begin position="235"/>
        <end position="245"/>
    </location>
</feature>
<feature type="helix" evidence="28">
    <location>
        <begin position="249"/>
        <end position="251"/>
    </location>
</feature>
<feature type="helix" evidence="28">
    <location>
        <begin position="252"/>
        <end position="265"/>
    </location>
</feature>
<feature type="helix" evidence="27">
    <location>
        <begin position="276"/>
        <end position="287"/>
    </location>
</feature>
<feature type="helix" evidence="27">
    <location>
        <begin position="295"/>
        <end position="305"/>
    </location>
</feature>
<feature type="helix" evidence="27">
    <location>
        <begin position="307"/>
        <end position="309"/>
    </location>
</feature>
<feature type="helix" evidence="27">
    <location>
        <begin position="310"/>
        <end position="324"/>
    </location>
</feature>
<evidence type="ECO:0000250" key="1">
    <source>
        <dbReference type="UniProtKB" id="A0A0H3K686"/>
    </source>
</evidence>
<evidence type="ECO:0000255" key="2">
    <source>
        <dbReference type="PROSITE-ProRule" id="PRU00477"/>
    </source>
</evidence>
<evidence type="ECO:0000255" key="3">
    <source>
        <dbReference type="PROSITE-ProRule" id="PRU01118"/>
    </source>
</evidence>
<evidence type="ECO:0000256" key="4">
    <source>
        <dbReference type="SAM" id="MobiDB-lite"/>
    </source>
</evidence>
<evidence type="ECO:0000269" key="5">
    <source>
    </source>
</evidence>
<evidence type="ECO:0000269" key="6">
    <source>
    </source>
</evidence>
<evidence type="ECO:0000269" key="7">
    <source>
    </source>
</evidence>
<evidence type="ECO:0000269" key="8">
    <source>
    </source>
</evidence>
<evidence type="ECO:0000269" key="9">
    <source>
    </source>
</evidence>
<evidence type="ECO:0000269" key="10">
    <source>
    </source>
</evidence>
<evidence type="ECO:0000269" key="11">
    <source>
    </source>
</evidence>
<evidence type="ECO:0000269" key="12">
    <source>
    </source>
</evidence>
<evidence type="ECO:0000269" key="13">
    <source>
    </source>
</evidence>
<evidence type="ECO:0000269" key="14">
    <source>
    </source>
</evidence>
<evidence type="ECO:0000269" key="15">
    <source>
    </source>
</evidence>
<evidence type="ECO:0000305" key="16"/>
<evidence type="ECO:0000305" key="17">
    <source>
    </source>
</evidence>
<evidence type="ECO:0000305" key="18">
    <source>
    </source>
</evidence>
<evidence type="ECO:0000305" key="19">
    <source>
    </source>
</evidence>
<evidence type="ECO:0000305" key="20">
    <source>
    </source>
</evidence>
<evidence type="ECO:0000305" key="21">
    <source>
    </source>
</evidence>
<evidence type="ECO:0000305" key="22">
    <source>
    </source>
</evidence>
<evidence type="ECO:0000305" key="23">
    <source>
    </source>
</evidence>
<evidence type="ECO:0007744" key="24">
    <source>
        <dbReference type="PDB" id="1DEE"/>
    </source>
</evidence>
<evidence type="ECO:0007829" key="25">
    <source>
        <dbReference type="PDB" id="1DEE"/>
    </source>
</evidence>
<evidence type="ECO:0007829" key="26">
    <source>
        <dbReference type="PDB" id="5U6A"/>
    </source>
</evidence>
<evidence type="ECO:0007829" key="27">
    <source>
        <dbReference type="PDB" id="6SOW"/>
    </source>
</evidence>
<evidence type="ECO:0007829" key="28">
    <source>
        <dbReference type="PDB" id="8DA5"/>
    </source>
</evidence>
<reference key="1">
    <citation type="journal article" date="1984" name="J. Biol. Chem.">
        <title>Complete sequence of the staphylococcal gene encoding protein A. A gene evolved through multiple duplications.</title>
        <authorList>
            <person name="Uhlen M."/>
            <person name="Guss B."/>
            <person name="Nilsson B."/>
            <person name="Gatenbeck S."/>
            <person name="Philipson L."/>
            <person name="Lindberg M."/>
        </authorList>
    </citation>
    <scope>NUCLEOTIDE SEQUENCE [GENOMIC DNA]</scope>
    <source>
        <strain>8325-4</strain>
    </source>
</reference>
<reference key="2">
    <citation type="journal article" date="1984" name="J. Biol. Chem.">
        <authorList>
            <person name="Uhlen M."/>
            <person name="Guss B."/>
            <person name="Nilsson B."/>
            <person name="Gatenbeck S."/>
            <person name="Philipson L."/>
            <person name="Lindberg M."/>
        </authorList>
    </citation>
    <scope>ERRATUM OF PUBMED:6319407</scope>
    <scope>SEQUENCE REVISION</scope>
</reference>
<reference key="3">
    <citation type="book" date="2006" name="Gram positive pathogens, 2nd edition">
        <title>The Staphylococcus aureus NCTC 8325 genome.</title>
        <editorList>
            <person name="Fischetti V."/>
            <person name="Novick R."/>
            <person name="Ferretti J."/>
            <person name="Portnoy D."/>
            <person name="Rood J."/>
        </editorList>
        <authorList>
            <person name="Gillaspy A.F."/>
            <person name="Worrell V."/>
            <person name="Orvis J."/>
            <person name="Roe B.A."/>
            <person name="Dyer D.W."/>
            <person name="Iandolo J.J."/>
        </authorList>
    </citation>
    <scope>NUCLEOTIDE SEQUENCE [LARGE SCALE GENOMIC DNA]</scope>
    <source>
        <strain>NCTC 8325 / PS 47</strain>
    </source>
</reference>
<reference key="4">
    <citation type="journal article" date="1983" name="Proc. Natl. Acad. Sci. U.S.A.">
        <title>Gene for staphylococcal protein A.</title>
        <authorList>
            <person name="Loefdahl S."/>
            <person name="Guss B."/>
            <person name="Uhlen M."/>
            <person name="Philipson L."/>
            <person name="Lindberg M."/>
        </authorList>
    </citation>
    <scope>NUCLEOTIDE SEQUENCE [GENOMIC DNA] OF 1-186</scope>
    <source>
        <strain>8325-4</strain>
    </source>
</reference>
<reference key="5">
    <citation type="journal article" date="1986" name="Eur. J. Biochem.">
        <title>Staphylococcal protein A consists of five IgG-binding domains.</title>
        <authorList>
            <person name="Moks T."/>
            <person name="Abrahmsen L."/>
            <person name="Nilsson B."/>
            <person name="Hellman U."/>
            <person name="Sjoequist J."/>
            <person name="Uhlen M."/>
        </authorList>
    </citation>
    <scope>PROTEIN SEQUENCE OF 37-42</scope>
    <scope>FUNCTION</scope>
    <scope>SUBCELLULAR LOCATION</scope>
    <scope>IMMUNOGLOBULIN-BINDING</scope>
    <source>
        <strain>A676</strain>
    </source>
</reference>
<reference key="6">
    <citation type="journal article" date="1966" name="J. Immunol.">
        <title>'Protein A' from S. aureus. I. Pseudo-immune reaction with human gamma-globulin.</title>
        <authorList>
            <person name="Forsgren A."/>
            <person name="Sjoequist J."/>
        </authorList>
    </citation>
    <scope>FUNCTION</scope>
    <scope>IMMUNOGLOBULIN-BINDING</scope>
    <source>
        <strain>ATCC 12598 / Cowan 1 / DSM 20372 / NCIMB 11787 / NCTC 8530</strain>
    </source>
</reference>
<reference key="7">
    <citation type="journal article" date="1987" name="Infect. Immun.">
        <title>Virulence of protein A-deficient and alpha-toxin-deficient mutants of Staphylococcus aureus isolated by allele replacement.</title>
        <authorList>
            <person name="Patel A.H."/>
            <person name="Nowlan P."/>
            <person name="Weavers E.D."/>
            <person name="Foster T."/>
        </authorList>
    </citation>
    <scope>FUNCTION</scope>
    <scope>SUBCELLULAR LOCATION</scope>
    <scope>DISRUPTION PHENOTYPE</scope>
    <source>
        <strain>8325-4</strain>
    </source>
</reference>
<reference key="8">
    <citation type="journal article" date="1992" name="Cell">
        <title>Sorting of protein A to the staphylococcal cell wall.</title>
        <authorList>
            <person name="Schneewind O."/>
            <person name="Model P."/>
            <person name="Fischetti V.A."/>
        </authorList>
    </citation>
    <scope>PROTEIN SEQUENCE OF 37-47</scope>
    <scope>SUBCELLULAR LOCATION</scope>
    <scope>DOMAIN</scope>
    <scope>TOPOLOGY</scope>
    <scope>MUTAGENESIS OF LYS-478; 482-LEU--LEU-516; 482-LEU--GLU-487; PRO-483; THR-485; 488-GLU--LEU-516; 514-ARG--LEU-516; 515-GLU-LEU-516 AND LEU-516</scope>
    <source>
        <strain>8325-4</strain>
        <strain>RN4220</strain>
    </source>
</reference>
<reference key="9">
    <citation type="journal article" date="1994" name="Mol. Microbiol.">
        <title>Proteolytic cleavage and cell wall anchoring at the LPXTG motif of surface proteins in gram-positive bacteria.</title>
        <authorList>
            <person name="Navarre W.W."/>
            <person name="Schneewind O."/>
        </authorList>
    </citation>
    <scope>SUBCELLULAR LOCATION</scope>
    <scope>CLEAVAGE SITE</scope>
    <source>
        <strain>8325-4</strain>
    </source>
</reference>
<reference key="10">
    <citation type="journal article" date="1995" name="Science">
        <title>Structure of the cell wall anchor of surface proteins in Staphylococcus aureus.</title>
        <authorList>
            <person name="Schneewind O."/>
            <person name="Fowler A."/>
            <person name="Faull K.F."/>
        </authorList>
    </citation>
    <scope>SUBCELLULAR LOCATION</scope>
    <scope>PEPTIDOGLYCAN CROSS-LINK</scope>
</reference>
<reference key="11">
    <citation type="journal article" date="1998" name="J. Biol. Chem.">
        <title>Anchor structure of staphylococcal surface proteins. II. Cooh-terminal structure of muramidase and amidase-solubilized surface protein.</title>
        <authorList>
            <person name="Navarre W.W."/>
            <person name="Ton-That H."/>
            <person name="Faull K.F."/>
            <person name="Schneewind O."/>
        </authorList>
    </citation>
    <scope>SUBCELLULAR LOCATION</scope>
    <scope>PEPTIDOGLYCAN CROSS-LINK</scope>
</reference>
<reference key="12">
    <citation type="journal article" date="1999" name="Science">
        <title>Staphylococcus aureus sortase, an enzyme that anchors surface proteins to the cell wall.</title>
        <authorList>
            <person name="Mazmanian S.K."/>
            <person name="Liu G."/>
            <person name="Ton-That H."/>
            <person name="Schneewind O."/>
        </authorList>
    </citation>
    <scope>SUBCELLULAR LOCATION</scope>
    <scope>PROCESSING BY SORTASE A</scope>
    <source>
        <strain>RN4220 / OS2</strain>
    </source>
</reference>
<reference key="13">
    <citation type="journal article" date="2003" name="J. Bacteriol.">
        <title>The YSIRK-G/S motif of staphylococcal protein A and its role in efficiency of signal peptide processing.</title>
        <authorList>
            <person name="Bae T."/>
            <person name="Schneewind O."/>
        </authorList>
    </citation>
    <scope>SUBCELLULAR LOCATION</scope>
    <scope>DOMAIN</scope>
    <scope>DISRUPTION PHENOTYPE</scope>
    <scope>MUTAGENESIS OF 7-TYR--ARG-10; GLY-15 AND SER-18</scope>
    <source>
        <strain>RN4220</strain>
    </source>
</reference>
<reference key="14">
    <citation type="journal article" date="2007" name="J. Bacteriol.">
        <title>Distribution of protein A on the surface of Staphylococcus aureus.</title>
        <authorList>
            <person name="DeDent A.C."/>
            <person name="McAdow M."/>
            <person name="Schneewind O."/>
        </authorList>
    </citation>
    <scope>SUBCELLULAR LOCATION</scope>
    <source>
        <strain>RN4220</strain>
    </source>
</reference>
<reference key="15">
    <citation type="journal article" date="2010" name="J. Bacteriol.">
        <title>Synthetic effects of secG and secY2 mutations on exoproteome biogenesis in Staphylococcus aureus.</title>
        <authorList>
            <person name="Sibbald M.J."/>
            <person name="Winter T."/>
            <person name="van der Kooi-Pol M.M."/>
            <person name="Buist G."/>
            <person name="Tsompanidou E."/>
            <person name="Bosma T."/>
            <person name="Schafer T."/>
            <person name="Ohlsen K."/>
            <person name="Hecker M."/>
            <person name="Antelmann H."/>
            <person name="Engelmann S."/>
            <person name="van Dijl J.M."/>
        </authorList>
    </citation>
    <scope>IDENTIFICATION BY MASS SPECTROMETRY</scope>
    <scope>SUBCELLULAR LOCATION</scope>
    <scope>INDUCTION</scope>
    <source>
        <strain>RN4220</strain>
    </source>
</reference>
<reference key="16">
    <citation type="journal article" date="2012" name="Appl. Environ. Microbiol.">
        <title>New range of vectors with a stringent 5-fluoroorotic acid-based counterselection system for generating mutants by allelic replacement in Staphylococcus aureus.</title>
        <authorList>
            <person name="Redder P."/>
            <person name="Linder P."/>
        </authorList>
    </citation>
    <scope>DISRUPTION PHENOTYPE</scope>
    <source>
        <strain>SA564</strain>
    </source>
</reference>
<reference evidence="24" key="17">
    <citation type="journal article" date="2000" name="Proc. Natl. Acad. Sci. U.S.A.">
        <title>Crystal structure of a Staphylococcus aureus protein A domain complexed with the Fab fragment of a human IgM antibody: structural basis for recognition of B-cell receptors and superantigen activity.</title>
        <authorList>
            <person name="Graille M."/>
            <person name="Stura E.A."/>
            <person name="Corper A.L."/>
            <person name="Sutton B.J."/>
            <person name="Taussig M.J."/>
            <person name="Charbonnier J.B."/>
            <person name="Silverman G.J."/>
        </authorList>
    </citation>
    <scope>X-RAY CRYSTALLOGRAPHY (2.70 ANGSTROMS) OF 100-153 IN COMPLEX WITH FAB FRAGMENT</scope>
    <scope>FUNCTION</scope>
</reference>
<name>SPA_STAA8</name>
<proteinExistence type="evidence at protein level"/>